<dbReference type="EC" id="2.1.1.199" evidence="1"/>
<dbReference type="EMBL" id="CP001164">
    <property type="protein sequence ID" value="ACI39236.1"/>
    <property type="molecule type" value="Genomic_DNA"/>
</dbReference>
<dbReference type="RefSeq" id="WP_000970479.1">
    <property type="nucleotide sequence ID" value="NC_011353.1"/>
</dbReference>
<dbReference type="SMR" id="B5YZB8"/>
<dbReference type="GeneID" id="86862592"/>
<dbReference type="KEGG" id="ecf:ECH74115_0090"/>
<dbReference type="HOGENOM" id="CLU_038422_2_0_6"/>
<dbReference type="GO" id="GO:0005737">
    <property type="term" value="C:cytoplasm"/>
    <property type="evidence" value="ECO:0007669"/>
    <property type="project" value="UniProtKB-SubCell"/>
</dbReference>
<dbReference type="GO" id="GO:0071424">
    <property type="term" value="F:rRNA (cytosine-N4-)-methyltransferase activity"/>
    <property type="evidence" value="ECO:0007669"/>
    <property type="project" value="UniProtKB-UniRule"/>
</dbReference>
<dbReference type="GO" id="GO:0070475">
    <property type="term" value="P:rRNA base methylation"/>
    <property type="evidence" value="ECO:0007669"/>
    <property type="project" value="UniProtKB-UniRule"/>
</dbReference>
<dbReference type="FunFam" id="1.10.150.170:FF:000001">
    <property type="entry name" value="Ribosomal RNA small subunit methyltransferase H"/>
    <property type="match status" value="1"/>
</dbReference>
<dbReference type="Gene3D" id="1.10.150.170">
    <property type="entry name" value="Putative methyltransferase TM0872, insert domain"/>
    <property type="match status" value="1"/>
</dbReference>
<dbReference type="Gene3D" id="3.40.50.150">
    <property type="entry name" value="Vaccinia Virus protein VP39"/>
    <property type="match status" value="1"/>
</dbReference>
<dbReference type="HAMAP" id="MF_01007">
    <property type="entry name" value="16SrRNA_methyltr_H"/>
    <property type="match status" value="1"/>
</dbReference>
<dbReference type="InterPro" id="IPR002903">
    <property type="entry name" value="RsmH"/>
</dbReference>
<dbReference type="InterPro" id="IPR023397">
    <property type="entry name" value="SAM-dep_MeTrfase_MraW_recog"/>
</dbReference>
<dbReference type="InterPro" id="IPR029063">
    <property type="entry name" value="SAM-dependent_MTases_sf"/>
</dbReference>
<dbReference type="NCBIfam" id="TIGR00006">
    <property type="entry name" value="16S rRNA (cytosine(1402)-N(4))-methyltransferase RsmH"/>
    <property type="match status" value="1"/>
</dbReference>
<dbReference type="PANTHER" id="PTHR11265:SF0">
    <property type="entry name" value="12S RRNA N4-METHYLCYTIDINE METHYLTRANSFERASE"/>
    <property type="match status" value="1"/>
</dbReference>
<dbReference type="PANTHER" id="PTHR11265">
    <property type="entry name" value="S-ADENOSYL-METHYLTRANSFERASE MRAW"/>
    <property type="match status" value="1"/>
</dbReference>
<dbReference type="Pfam" id="PF01795">
    <property type="entry name" value="Methyltransf_5"/>
    <property type="match status" value="1"/>
</dbReference>
<dbReference type="PIRSF" id="PIRSF004486">
    <property type="entry name" value="MraW"/>
    <property type="match status" value="1"/>
</dbReference>
<dbReference type="SUPFAM" id="SSF81799">
    <property type="entry name" value="Putative methyltransferase TM0872, insert domain"/>
    <property type="match status" value="1"/>
</dbReference>
<dbReference type="SUPFAM" id="SSF53335">
    <property type="entry name" value="S-adenosyl-L-methionine-dependent methyltransferases"/>
    <property type="match status" value="1"/>
</dbReference>
<organism>
    <name type="scientific">Escherichia coli O157:H7 (strain EC4115 / EHEC)</name>
    <dbReference type="NCBI Taxonomy" id="444450"/>
    <lineage>
        <taxon>Bacteria</taxon>
        <taxon>Pseudomonadati</taxon>
        <taxon>Pseudomonadota</taxon>
        <taxon>Gammaproteobacteria</taxon>
        <taxon>Enterobacterales</taxon>
        <taxon>Enterobacteriaceae</taxon>
        <taxon>Escherichia</taxon>
    </lineage>
</organism>
<keyword id="KW-0963">Cytoplasm</keyword>
<keyword id="KW-0489">Methyltransferase</keyword>
<keyword id="KW-0698">rRNA processing</keyword>
<keyword id="KW-0949">S-adenosyl-L-methionine</keyword>
<keyword id="KW-0808">Transferase</keyword>
<name>RSMH_ECO5E</name>
<comment type="function">
    <text evidence="1">Specifically methylates the N4 position of cytidine in position 1402 (C1402) of 16S rRNA.</text>
</comment>
<comment type="catalytic activity">
    <reaction evidence="1">
        <text>cytidine(1402) in 16S rRNA + S-adenosyl-L-methionine = N(4)-methylcytidine(1402) in 16S rRNA + S-adenosyl-L-homocysteine + H(+)</text>
        <dbReference type="Rhea" id="RHEA:42928"/>
        <dbReference type="Rhea" id="RHEA-COMP:10286"/>
        <dbReference type="Rhea" id="RHEA-COMP:10287"/>
        <dbReference type="ChEBI" id="CHEBI:15378"/>
        <dbReference type="ChEBI" id="CHEBI:57856"/>
        <dbReference type="ChEBI" id="CHEBI:59789"/>
        <dbReference type="ChEBI" id="CHEBI:74506"/>
        <dbReference type="ChEBI" id="CHEBI:82748"/>
        <dbReference type="EC" id="2.1.1.199"/>
    </reaction>
</comment>
<comment type="subcellular location">
    <subcellularLocation>
        <location evidence="1">Cytoplasm</location>
    </subcellularLocation>
</comment>
<comment type="similarity">
    <text evidence="1">Belongs to the methyltransferase superfamily. RsmH family.</text>
</comment>
<proteinExistence type="inferred from homology"/>
<accession>B5YZB8</accession>
<feature type="chain" id="PRO_0000386878" description="Ribosomal RNA small subunit methyltransferase H">
    <location>
        <begin position="1"/>
        <end position="313"/>
    </location>
</feature>
<feature type="binding site" evidence="1">
    <location>
        <begin position="35"/>
        <end position="37"/>
    </location>
    <ligand>
        <name>S-adenosyl-L-methionine</name>
        <dbReference type="ChEBI" id="CHEBI:59789"/>
    </ligand>
</feature>
<feature type="binding site" evidence="1">
    <location>
        <position position="55"/>
    </location>
    <ligand>
        <name>S-adenosyl-L-methionine</name>
        <dbReference type="ChEBI" id="CHEBI:59789"/>
    </ligand>
</feature>
<feature type="binding site" evidence="1">
    <location>
        <position position="79"/>
    </location>
    <ligand>
        <name>S-adenosyl-L-methionine</name>
        <dbReference type="ChEBI" id="CHEBI:59789"/>
    </ligand>
</feature>
<feature type="binding site" evidence="1">
    <location>
        <position position="101"/>
    </location>
    <ligand>
        <name>S-adenosyl-L-methionine</name>
        <dbReference type="ChEBI" id="CHEBI:59789"/>
    </ligand>
</feature>
<feature type="binding site" evidence="1">
    <location>
        <position position="108"/>
    </location>
    <ligand>
        <name>S-adenosyl-L-methionine</name>
        <dbReference type="ChEBI" id="CHEBI:59789"/>
    </ligand>
</feature>
<gene>
    <name evidence="1" type="primary">rsmH</name>
    <name type="synonym">mraW</name>
    <name type="ordered locus">ECH74115_0090</name>
</gene>
<evidence type="ECO:0000255" key="1">
    <source>
        <dbReference type="HAMAP-Rule" id="MF_01007"/>
    </source>
</evidence>
<reference key="1">
    <citation type="journal article" date="2011" name="Proc. Natl. Acad. Sci. U.S.A.">
        <title>Genomic anatomy of Escherichia coli O157:H7 outbreaks.</title>
        <authorList>
            <person name="Eppinger M."/>
            <person name="Mammel M.K."/>
            <person name="Leclerc J.E."/>
            <person name="Ravel J."/>
            <person name="Cebula T.A."/>
        </authorList>
    </citation>
    <scope>NUCLEOTIDE SEQUENCE [LARGE SCALE GENOMIC DNA]</scope>
    <source>
        <strain>EC4115 / EHEC</strain>
    </source>
</reference>
<sequence length="313" mass="34878">MMENYKHTTVLLDEAVNGLNIRPDGIYIDGTFGRGGHSRLILSQLGEEGRLLAIDRDPQAIAVAKTIDDPRFSIIHGPFSALGEYVAERDLIGKIDGILLDLGVSSPQLDDAERGFSFMRDGPLDMRMDPTRGQSAAEWLQTAEEADIAWVLKTYGEERFAKRIARAIVERNREQPMTRTKELAEVVAAATPVKDKFKHPATRTFQAVRIWVNSELEEIEQALKSSLNVLAPGGRLSIISFHSLEDRIVKRFMRENSRGPQVPAGLPMTEEQLKKLGGRQLRALGKLMPGEEEVAENPRARSSVLRIAERTNA</sequence>
<protein>
    <recommendedName>
        <fullName evidence="1">Ribosomal RNA small subunit methyltransferase H</fullName>
        <ecNumber evidence="1">2.1.1.199</ecNumber>
    </recommendedName>
    <alternativeName>
        <fullName evidence="1">16S rRNA m(4)C1402 methyltransferase</fullName>
    </alternativeName>
    <alternativeName>
        <fullName evidence="1">rRNA (cytosine-N(4)-)-methyltransferase RsmH</fullName>
    </alternativeName>
</protein>